<feature type="chain" id="PRO_0000448108" description="Transcript termination protein OPG145">
    <location>
        <begin position="1"/>
        <end position="493"/>
    </location>
</feature>
<feature type="domain" description="Helicase ATP-binding" evidence="2">
    <location>
        <begin position="100"/>
        <end position="256"/>
    </location>
</feature>
<feature type="short sequence motif" description="DESH box">
    <location>
        <begin position="206"/>
        <end position="209"/>
    </location>
</feature>
<feature type="binding site" evidence="2">
    <location>
        <begin position="113"/>
        <end position="120"/>
    </location>
    <ligand>
        <name>ATP</name>
        <dbReference type="ChEBI" id="CHEBI:30616"/>
    </ligand>
</feature>
<feature type="sequence variant" description="In strain: Garcia-1966.">
    <original>L</original>
    <variation>S</variation>
    <location>
        <position position="40"/>
    </location>
</feature>
<feature type="sequence variant" description="In strain: Garcia-1966.">
    <original>S</original>
    <variation>L</variation>
    <location>
        <position position="319"/>
    </location>
</feature>
<organismHost>
    <name type="scientific">Homo sapiens</name>
    <name type="common">Human</name>
    <dbReference type="NCBI Taxonomy" id="9606"/>
</organismHost>
<comment type="function">
    <text evidence="1">DNA helicase which seems to act as a postreplicative transcription termination factor. Involved in ATP-dependent release of nascent RNA. Forms a stable complex with single-stranded DNA, and to a lesser extent RNA.</text>
</comment>
<comment type="subunit">
    <text evidence="1">Interacts with OPG087. Might be part of a transcription complex composed at least of OPG087, OPG110, and OPG145.</text>
</comment>
<comment type="subcellular location">
    <subcellularLocation>
        <location evidence="1">Virion</location>
    </subcellularLocation>
    <text evidence="1">Localizes to the virion core.</text>
</comment>
<comment type="similarity">
    <text evidence="3">Belongs to the helicase family. Poxviruses subfamily.</text>
</comment>
<evidence type="ECO:0000250" key="1">
    <source>
        <dbReference type="UniProtKB" id="P16712"/>
    </source>
</evidence>
<evidence type="ECO:0000255" key="2">
    <source>
        <dbReference type="PROSITE-ProRule" id="PRU00541"/>
    </source>
</evidence>
<evidence type="ECO:0000305" key="3"/>
<name>PG145_VARV</name>
<reference key="1">
    <citation type="journal article" date="1993" name="Nature">
        <title>Potential virulence determinants in terminal regions of variola smallpox virus genome.</title>
        <authorList>
            <person name="Massung R.F."/>
            <person name="Esposito J.J."/>
            <person name="Liu L.I."/>
            <person name="Qi J."/>
            <person name="Utterback T.R."/>
            <person name="Knight J.C."/>
            <person name="Aubin L."/>
            <person name="Yuran T.E."/>
            <person name="Parsons J.M."/>
            <person name="Loparev V.N."/>
            <person name="Selivanov N.A."/>
            <person name="Cavallaro K.F."/>
            <person name="Kerlavage A.R."/>
            <person name="Mahy B.W.J."/>
            <person name="Venter J.C."/>
        </authorList>
    </citation>
    <scope>NUCLEOTIDE SEQUENCE [GENOMIC DNA]</scope>
    <source>
        <strain>Bangladesh-1975</strain>
    </source>
</reference>
<reference key="2">
    <citation type="submission" date="1995-12" db="EMBL/GenBank/DDBJ databases">
        <title>XhoI-D DNA fragment of Variola minor virus strain Garcia-1966.</title>
        <authorList>
            <person name="Shchelkunov S.N."/>
            <person name="Totmenin A.V."/>
            <person name="Sosnovtsev S.V."/>
            <person name="Safronov P.F."/>
            <person name="Resenchuk S.M."/>
            <person name="Blinov V.M."/>
            <person name="Sandakhchiev L.S."/>
        </authorList>
    </citation>
    <scope>NUCLEOTIDE SEQUENCE [GENOMIC DNA]</scope>
    <source>
        <strain>Garcia-1966</strain>
    </source>
</reference>
<reference key="3">
    <citation type="journal article" date="2000" name="Virology">
        <title>Alastrim smallpox variola minor virus genome DNA sequences.</title>
        <authorList>
            <person name="Shchelkunov S.N."/>
            <person name="Totmenin A.V."/>
            <person name="Loparev V.N."/>
            <person name="Safronov P.F."/>
            <person name="Gutorov V.V."/>
            <person name="Chizhikov V.E."/>
            <person name="Knight J.C."/>
            <person name="Parsons J.M."/>
            <person name="Massung R.F."/>
            <person name="Esposito J.J."/>
        </authorList>
    </citation>
    <scope>NUCLEOTIDE SEQUENCE [LARGE SCALE GENOMIC DNA]</scope>
    <source>
        <strain>Garcia-1966</strain>
    </source>
</reference>
<gene>
    <name type="primary">OPG145</name>
    <name type="ORF">A18R</name>
    <name type="ORF">A19R</name>
</gene>
<protein>
    <recommendedName>
        <fullName>Transcript termination protein OPG145</fullName>
        <ecNumber>3.6.4.-</ecNumber>
    </recommendedName>
    <alternativeName>
        <fullName>56 kDa abortive late protein</fullName>
    </alternativeName>
</protein>
<sequence length="493" mass="56676">MSLLKMEYNLYAELKKITCGQSLSLFNEDGDFVEVEPGSLFKFLIPKGFYSSPSVKTSLVFETLTTTDNKITSINPTNAPKLYPLQHKVVSEVVSNMRKMIKLKRPLYITLHLACGFGKTITTCYLMATHGRKTVICVPNKMLIHQWKTQVEAVGLEHKISIDGVSSLLKELKTQSPDVLIVVSRHLTNDAFCKYINKHYDLFILDESHTYNLMNNTAVTRFLAYYPPMMCYFLTATPRPSNRIYCNSIINIAKLSDLKKTIYAVDSFFEPYSTDNIRHMIKRLDGPSNKYHIYTEKLLSVDEPRNQLILNTLVEEFKSGTINRVLVITKLREHMVLFYKRLLDLFGPEVVFIGDAQNRRTPDMVKSIKELNRFIFVSTLFYSGTGLDIPSLDSLFICSAVINNMQIEQLLGRVCRETELLDRTVYVFPNTSVKEIKYMIGNFVQRIISLSVDKLGFKQESYRKHQESDPTSVCTASSREERVLNRIFNSQNR</sequence>
<keyword id="KW-0067">ATP-binding</keyword>
<keyword id="KW-0238">DNA-binding</keyword>
<keyword id="KW-0347">Helicase</keyword>
<keyword id="KW-0378">Hydrolase</keyword>
<keyword id="KW-0426">Late protein</keyword>
<keyword id="KW-0547">Nucleotide-binding</keyword>
<keyword id="KW-0597">Phosphoprotein</keyword>
<keyword id="KW-0804">Transcription</keyword>
<keyword id="KW-0805">Transcription regulation</keyword>
<keyword id="KW-0806">Transcription termination</keyword>
<keyword id="KW-0946">Virion</keyword>
<proteinExistence type="inferred from homology"/>
<dbReference type="EC" id="3.6.4.-"/>
<dbReference type="EMBL" id="L22579">
    <property type="protein sequence ID" value="AAA60870.1"/>
    <property type="molecule type" value="Genomic_DNA"/>
</dbReference>
<dbReference type="EMBL" id="X76268">
    <property type="protein sequence ID" value="CAA53891.1"/>
    <property type="molecule type" value="Genomic_DNA"/>
</dbReference>
<dbReference type="EMBL" id="Y16780">
    <property type="protein sequence ID" value="CAB54722.1"/>
    <property type="molecule type" value="Genomic_DNA"/>
</dbReference>
<dbReference type="PIR" id="H72165">
    <property type="entry name" value="H72165"/>
</dbReference>
<dbReference type="PIR" id="T28560">
    <property type="entry name" value="T28560"/>
</dbReference>
<dbReference type="RefSeq" id="NP_042166.1">
    <property type="nucleotide sequence ID" value="NC_001611.1"/>
</dbReference>
<dbReference type="GeneID" id="1486493"/>
<dbReference type="KEGG" id="vg:1486493"/>
<dbReference type="Proteomes" id="UP000111493">
    <property type="component" value="Segment"/>
</dbReference>
<dbReference type="Proteomes" id="UP000119805">
    <property type="component" value="Segment"/>
</dbReference>
<dbReference type="GO" id="GO:0044423">
    <property type="term" value="C:virion component"/>
    <property type="evidence" value="ECO:0007669"/>
    <property type="project" value="UniProtKB-KW"/>
</dbReference>
<dbReference type="GO" id="GO:0005524">
    <property type="term" value="F:ATP binding"/>
    <property type="evidence" value="ECO:0007669"/>
    <property type="project" value="UniProtKB-KW"/>
</dbReference>
<dbReference type="GO" id="GO:0003677">
    <property type="term" value="F:DNA binding"/>
    <property type="evidence" value="ECO:0007669"/>
    <property type="project" value="UniProtKB-KW"/>
</dbReference>
<dbReference type="GO" id="GO:0004386">
    <property type="term" value="F:helicase activity"/>
    <property type="evidence" value="ECO:0007669"/>
    <property type="project" value="UniProtKB-KW"/>
</dbReference>
<dbReference type="GO" id="GO:0016787">
    <property type="term" value="F:hydrolase activity"/>
    <property type="evidence" value="ECO:0007669"/>
    <property type="project" value="UniProtKB-KW"/>
</dbReference>
<dbReference type="GO" id="GO:0006353">
    <property type="term" value="P:DNA-templated transcription termination"/>
    <property type="evidence" value="ECO:0007669"/>
    <property type="project" value="UniProtKB-KW"/>
</dbReference>
<dbReference type="CDD" id="cd18785">
    <property type="entry name" value="SF2_C"/>
    <property type="match status" value="1"/>
</dbReference>
<dbReference type="Gene3D" id="3.40.50.300">
    <property type="entry name" value="P-loop containing nucleotide triphosphate hydrolases"/>
    <property type="match status" value="2"/>
</dbReference>
<dbReference type="InterPro" id="IPR006935">
    <property type="entry name" value="Helicase/UvrB_N"/>
</dbReference>
<dbReference type="InterPro" id="IPR014001">
    <property type="entry name" value="Helicase_ATP-bd"/>
</dbReference>
<dbReference type="InterPro" id="IPR050742">
    <property type="entry name" value="Helicase_Restrict-Modif_Enz"/>
</dbReference>
<dbReference type="InterPro" id="IPR027417">
    <property type="entry name" value="P-loop_NTPase"/>
</dbReference>
<dbReference type="PANTHER" id="PTHR47396:SF1">
    <property type="entry name" value="ATP-DEPENDENT HELICASE IRC3-RELATED"/>
    <property type="match status" value="1"/>
</dbReference>
<dbReference type="PANTHER" id="PTHR47396">
    <property type="entry name" value="TYPE I RESTRICTION ENZYME ECOKI R PROTEIN"/>
    <property type="match status" value="1"/>
</dbReference>
<dbReference type="Pfam" id="PF04851">
    <property type="entry name" value="ResIII"/>
    <property type="match status" value="1"/>
</dbReference>
<dbReference type="SMART" id="SM00487">
    <property type="entry name" value="DEXDc"/>
    <property type="match status" value="1"/>
</dbReference>
<dbReference type="SUPFAM" id="SSF52540">
    <property type="entry name" value="P-loop containing nucleoside triphosphate hydrolases"/>
    <property type="match status" value="1"/>
</dbReference>
<dbReference type="PROSITE" id="PS51192">
    <property type="entry name" value="HELICASE_ATP_BIND_1"/>
    <property type="match status" value="1"/>
</dbReference>
<accession>P0DSZ6</accession>
<accession>P33827</accession>
<accession>Q76PY3</accession>
<accession>Q89165</accession>
<organism>
    <name type="scientific">Variola virus</name>
    <dbReference type="NCBI Taxonomy" id="10255"/>
    <lineage>
        <taxon>Viruses</taxon>
        <taxon>Varidnaviria</taxon>
        <taxon>Bamfordvirae</taxon>
        <taxon>Nucleocytoviricota</taxon>
        <taxon>Pokkesviricetes</taxon>
        <taxon>Chitovirales</taxon>
        <taxon>Poxviridae</taxon>
        <taxon>Chordopoxvirinae</taxon>
        <taxon>Orthopoxvirus</taxon>
    </lineage>
</organism>